<reference key="1">
    <citation type="journal article" date="2008" name="FEMS Yeast Res.">
        <title>Promiscuous DNA in the nuclear genomes of hemiascomycetous yeasts.</title>
        <authorList>
            <person name="Sacerdot C."/>
            <person name="Casaregola S."/>
            <person name="Lafontaine I."/>
            <person name="Tekaia F."/>
            <person name="Dujon B."/>
            <person name="Ozier-Kalogeropoulos O."/>
        </authorList>
    </citation>
    <scope>NUCLEOTIDE SEQUENCE [LARGE SCALE GENOMIC DNA]</scope>
    <source>
        <strain>ATCC 36239 / CBS 767 / BCRC 21394 / JCM 1990 / NBRC 0083 / IGC 2968</strain>
    </source>
</reference>
<geneLocation type="mitochondrion"/>
<gene>
    <name type="primary">ATP8</name>
</gene>
<name>ATP8_DEBHA</name>
<comment type="function">
    <text evidence="1">Mitochondrial membrane ATP synthase (F(1)F(0) ATP synthase or Complex V) produces ATP from ADP in the presence of a proton gradient across the membrane which is generated by electron transport complexes of the respiratory chain. F-type ATPases consist of two structural domains, F(1) - containing the extramembraneous catalytic core and F(0) - containing the membrane proton channel, linked together by a central stalk and a peripheral stalk. During catalysis, ATP synthesis in the catalytic domain of F(1) is coupled via a rotary mechanism of the central stalk subunits to proton translocation. Part of the complex F(0) domain. Minor subunit located with subunit a in the membrane (By similarity).</text>
</comment>
<comment type="subunit">
    <text evidence="1">F-type ATPases have 2 components, CF(1) - the catalytic core - and CF(0) - the membrane proton channel.</text>
</comment>
<comment type="subcellular location">
    <subcellularLocation>
        <location>Mitochondrion membrane</location>
        <topology>Single-pass membrane protein</topology>
    </subcellularLocation>
</comment>
<comment type="similarity">
    <text evidence="3">Belongs to the ATPase protein 8 family.</text>
</comment>
<keyword id="KW-0066">ATP synthesis</keyword>
<keyword id="KW-0138">CF(0)</keyword>
<keyword id="KW-0375">Hydrogen ion transport</keyword>
<keyword id="KW-0406">Ion transport</keyword>
<keyword id="KW-0472">Membrane</keyword>
<keyword id="KW-0496">Mitochondrion</keyword>
<keyword id="KW-1185">Reference proteome</keyword>
<keyword id="KW-0812">Transmembrane</keyword>
<keyword id="KW-1133">Transmembrane helix</keyword>
<keyword id="KW-0813">Transport</keyword>
<dbReference type="EMBL" id="DQ508940">
    <property type="protein sequence ID" value="ABF58074.1"/>
    <property type="molecule type" value="Genomic_DNA"/>
</dbReference>
<dbReference type="RefSeq" id="YP_001621425.1">
    <property type="nucleotide sequence ID" value="NC_010166.1"/>
</dbReference>
<dbReference type="SMR" id="A9RAH3"/>
<dbReference type="FunCoup" id="A9RAH3">
    <property type="interactions" value="100"/>
</dbReference>
<dbReference type="STRING" id="284592.A9RAH3"/>
<dbReference type="GeneID" id="5845847"/>
<dbReference type="KEGG" id="dha:ATP8"/>
<dbReference type="InParanoid" id="A9RAH3"/>
<dbReference type="Proteomes" id="UP000000599">
    <property type="component" value="Mitochondrion"/>
</dbReference>
<dbReference type="GO" id="GO:0031966">
    <property type="term" value="C:mitochondrial membrane"/>
    <property type="evidence" value="ECO:0007669"/>
    <property type="project" value="UniProtKB-SubCell"/>
</dbReference>
<dbReference type="GO" id="GO:0045259">
    <property type="term" value="C:proton-transporting ATP synthase complex"/>
    <property type="evidence" value="ECO:0007669"/>
    <property type="project" value="UniProtKB-KW"/>
</dbReference>
<dbReference type="GO" id="GO:0046933">
    <property type="term" value="F:proton-transporting ATP synthase activity, rotational mechanism"/>
    <property type="evidence" value="ECO:0007669"/>
    <property type="project" value="TreeGrafter"/>
</dbReference>
<dbReference type="InterPro" id="IPR009230">
    <property type="entry name" value="ATP_synth_su8_fun"/>
</dbReference>
<dbReference type="PANTHER" id="PTHR36101">
    <property type="entry name" value="ATP SYNTHASE PROTEIN 8"/>
    <property type="match status" value="1"/>
</dbReference>
<dbReference type="PANTHER" id="PTHR36101:SF1">
    <property type="entry name" value="ATP SYNTHASE PROTEIN 8"/>
    <property type="match status" value="1"/>
</dbReference>
<dbReference type="Pfam" id="PF05933">
    <property type="entry name" value="Fun_ATP-synt_8"/>
    <property type="match status" value="1"/>
</dbReference>
<evidence type="ECO:0000250" key="1"/>
<evidence type="ECO:0000255" key="2"/>
<evidence type="ECO:0000305" key="3"/>
<proteinExistence type="inferred from homology"/>
<protein>
    <recommendedName>
        <fullName>ATP synthase protein 8</fullName>
    </recommendedName>
    <alternativeName>
        <fullName>A6L</fullName>
    </alternativeName>
    <alternativeName>
        <fullName>F-ATPase subunit 8</fullName>
    </alternativeName>
</protein>
<feature type="chain" id="PRO_0000355028" description="ATP synthase protein 8">
    <location>
        <begin position="1"/>
        <end position="48"/>
    </location>
</feature>
<feature type="transmembrane region" description="Helical" evidence="2">
    <location>
        <begin position="12"/>
        <end position="32"/>
    </location>
</feature>
<accession>A9RAH3</accession>
<sequence length="48" mass="5487">MPQLVPFYFTNLLTFGMLAISMLLYLVSTIILPNILRLLVARTTMTKL</sequence>
<organism>
    <name type="scientific">Debaryomyces hansenii (strain ATCC 36239 / CBS 767 / BCRC 21394 / JCM 1990 / NBRC 0083 / IGC 2968)</name>
    <name type="common">Yeast</name>
    <name type="synonym">Torulaspora hansenii</name>
    <dbReference type="NCBI Taxonomy" id="284592"/>
    <lineage>
        <taxon>Eukaryota</taxon>
        <taxon>Fungi</taxon>
        <taxon>Dikarya</taxon>
        <taxon>Ascomycota</taxon>
        <taxon>Saccharomycotina</taxon>
        <taxon>Pichiomycetes</taxon>
        <taxon>Debaryomycetaceae</taxon>
        <taxon>Debaryomyces</taxon>
    </lineage>
</organism>